<organism>
    <name type="scientific">Methanocella arvoryzae (strain DSM 22066 / NBRC 105507 / MRE50)</name>
    <dbReference type="NCBI Taxonomy" id="351160"/>
    <lineage>
        <taxon>Archaea</taxon>
        <taxon>Methanobacteriati</taxon>
        <taxon>Methanobacteriota</taxon>
        <taxon>Stenosarchaea group</taxon>
        <taxon>Methanomicrobia</taxon>
        <taxon>Methanocellales</taxon>
        <taxon>Methanocellaceae</taxon>
        <taxon>Methanocella</taxon>
    </lineage>
</organism>
<protein>
    <recommendedName>
        <fullName evidence="2">Elongation factor 1-alpha</fullName>
        <shortName evidence="2">EF-1-alpha</shortName>
        <ecNumber evidence="2">3.6.5.3</ecNumber>
    </recommendedName>
    <alternativeName>
        <fullName evidence="2">Elongation factor Tu</fullName>
        <shortName evidence="2">EF-Tu</shortName>
    </alternativeName>
</protein>
<comment type="function">
    <text evidence="2">GTP hydrolase that promotes the GTP-dependent binding of aminoacyl-tRNA to the A-site of ribosomes during protein biosynthesis.</text>
</comment>
<comment type="catalytic activity">
    <reaction evidence="2">
        <text>GTP + H2O = GDP + phosphate + H(+)</text>
        <dbReference type="Rhea" id="RHEA:19669"/>
        <dbReference type="ChEBI" id="CHEBI:15377"/>
        <dbReference type="ChEBI" id="CHEBI:15378"/>
        <dbReference type="ChEBI" id="CHEBI:37565"/>
        <dbReference type="ChEBI" id="CHEBI:43474"/>
        <dbReference type="ChEBI" id="CHEBI:58189"/>
        <dbReference type="EC" id="3.6.5.3"/>
    </reaction>
    <physiologicalReaction direction="left-to-right" evidence="2">
        <dbReference type="Rhea" id="RHEA:19670"/>
    </physiologicalReaction>
</comment>
<comment type="subcellular location">
    <subcellularLocation>
        <location>Cytoplasm</location>
    </subcellularLocation>
</comment>
<comment type="similarity">
    <text evidence="2">Belongs to the TRAFAC class translation factor GTPase superfamily. Classic translation factor GTPase family. EF-Tu/EF-1A subfamily.</text>
</comment>
<keyword id="KW-0963">Cytoplasm</keyword>
<keyword id="KW-0251">Elongation factor</keyword>
<keyword id="KW-0342">GTP-binding</keyword>
<keyword id="KW-0378">Hydrolase</keyword>
<keyword id="KW-0460">Magnesium</keyword>
<keyword id="KW-0479">Metal-binding</keyword>
<keyword id="KW-0547">Nucleotide-binding</keyword>
<keyword id="KW-0648">Protein biosynthesis</keyword>
<keyword id="KW-1185">Reference proteome</keyword>
<feature type="chain" id="PRO_1000015784" description="Elongation factor 1-alpha">
    <location>
        <begin position="1"/>
        <end position="426"/>
    </location>
</feature>
<feature type="domain" description="tr-type G">
    <location>
        <begin position="5"/>
        <end position="221"/>
    </location>
</feature>
<feature type="region of interest" description="G1" evidence="1">
    <location>
        <begin position="14"/>
        <end position="21"/>
    </location>
</feature>
<feature type="region of interest" description="G2" evidence="1">
    <location>
        <begin position="70"/>
        <end position="74"/>
    </location>
</feature>
<feature type="region of interest" description="G3" evidence="1">
    <location>
        <begin position="91"/>
        <end position="94"/>
    </location>
</feature>
<feature type="region of interest" description="G4" evidence="1">
    <location>
        <begin position="146"/>
        <end position="149"/>
    </location>
</feature>
<feature type="region of interest" description="G5" evidence="1">
    <location>
        <begin position="185"/>
        <end position="187"/>
    </location>
</feature>
<feature type="binding site" evidence="2">
    <location>
        <begin position="14"/>
        <end position="21"/>
    </location>
    <ligand>
        <name>GTP</name>
        <dbReference type="ChEBI" id="CHEBI:37565"/>
    </ligand>
</feature>
<feature type="binding site" evidence="2">
    <location>
        <position position="21"/>
    </location>
    <ligand>
        <name>Mg(2+)</name>
        <dbReference type="ChEBI" id="CHEBI:18420"/>
    </ligand>
</feature>
<feature type="binding site" evidence="2">
    <location>
        <begin position="91"/>
        <end position="95"/>
    </location>
    <ligand>
        <name>GTP</name>
        <dbReference type="ChEBI" id="CHEBI:37565"/>
    </ligand>
</feature>
<feature type="binding site" evidence="2">
    <location>
        <begin position="146"/>
        <end position="149"/>
    </location>
    <ligand>
        <name>GTP</name>
        <dbReference type="ChEBI" id="CHEBI:37565"/>
    </ligand>
</feature>
<name>EF1A_METAR</name>
<sequence length="426" mass="46833">MAATKPHINLAVIGHIDHGKSTLVGRLLFETGAVPAHIIEQYKKEAESKGKGTFEFAWVMDSLKEERERGITIDIAHRRFDTEKYYFTVVDCPGHRDFVKNMITGASQADAAILVCAAPDGVMQQTKEHIFLSKTLGINQLIIAVNKMDAINYDQKRYNEVKEEVSKILRMIGFKPDQIPFIPTSAFKGTNIAKHAEETPWYTGVTILEALNALKEPEKPTQLPLRVPIQDVYTISGIGLVPVGRVETGIMKKGDKVIFRPGIDGVGHAGEVKSIEMHHEEIPQALPGDNIGFNVRGIEKNLIRRGDVCGHVDKQPTVAVEFKAQVVVLQHPSAITAGYTPVFHCHTAQVACTLTQILATLDPKTGGVKEQNPPFIKTGDAAIVLIRPTRPLVIEKVKEIPQLGRFAIRDMGQTVAAGVVMDITPK</sequence>
<evidence type="ECO:0000250" key="1"/>
<evidence type="ECO:0000255" key="2">
    <source>
        <dbReference type="HAMAP-Rule" id="MF_00118"/>
    </source>
</evidence>
<gene>
    <name evidence="2" type="primary">tuf</name>
    <name type="ordered locus">UNCMA_28450</name>
    <name type="ORF">LRC365</name>
</gene>
<dbReference type="EC" id="3.6.5.3" evidence="2"/>
<dbReference type="EMBL" id="AM114193">
    <property type="protein sequence ID" value="CAJ35331.1"/>
    <property type="molecule type" value="Genomic_DNA"/>
</dbReference>
<dbReference type="RefSeq" id="WP_012037160.1">
    <property type="nucleotide sequence ID" value="NC_009464.1"/>
</dbReference>
<dbReference type="SMR" id="Q0W8G2"/>
<dbReference type="STRING" id="351160.LRC365"/>
<dbReference type="GeneID" id="5144924"/>
<dbReference type="KEGG" id="rci:LRC365"/>
<dbReference type="PATRIC" id="fig|351160.9.peg.2918"/>
<dbReference type="eggNOG" id="arCOG01561">
    <property type="taxonomic scope" value="Archaea"/>
</dbReference>
<dbReference type="OrthoDB" id="371718at2157"/>
<dbReference type="Proteomes" id="UP000000663">
    <property type="component" value="Chromosome"/>
</dbReference>
<dbReference type="GO" id="GO:0005737">
    <property type="term" value="C:cytoplasm"/>
    <property type="evidence" value="ECO:0007669"/>
    <property type="project" value="UniProtKB-SubCell"/>
</dbReference>
<dbReference type="GO" id="GO:0005525">
    <property type="term" value="F:GTP binding"/>
    <property type="evidence" value="ECO:0007669"/>
    <property type="project" value="UniProtKB-UniRule"/>
</dbReference>
<dbReference type="GO" id="GO:0003924">
    <property type="term" value="F:GTPase activity"/>
    <property type="evidence" value="ECO:0007669"/>
    <property type="project" value="InterPro"/>
</dbReference>
<dbReference type="GO" id="GO:0003746">
    <property type="term" value="F:translation elongation factor activity"/>
    <property type="evidence" value="ECO:0007669"/>
    <property type="project" value="UniProtKB-UniRule"/>
</dbReference>
<dbReference type="CDD" id="cd01883">
    <property type="entry name" value="EF1_alpha"/>
    <property type="match status" value="1"/>
</dbReference>
<dbReference type="CDD" id="cd03693">
    <property type="entry name" value="EF1_alpha_II"/>
    <property type="match status" value="1"/>
</dbReference>
<dbReference type="CDD" id="cd03705">
    <property type="entry name" value="EF1_alpha_III"/>
    <property type="match status" value="1"/>
</dbReference>
<dbReference type="FunFam" id="2.40.30.10:FF:000005">
    <property type="entry name" value="Elongation factor 1-alpha"/>
    <property type="match status" value="1"/>
</dbReference>
<dbReference type="Gene3D" id="3.40.50.300">
    <property type="entry name" value="P-loop containing nucleotide triphosphate hydrolases"/>
    <property type="match status" value="1"/>
</dbReference>
<dbReference type="Gene3D" id="2.40.30.10">
    <property type="entry name" value="Translation factors"/>
    <property type="match status" value="2"/>
</dbReference>
<dbReference type="HAMAP" id="MF_00118_A">
    <property type="entry name" value="EF_Tu_A"/>
    <property type="match status" value="1"/>
</dbReference>
<dbReference type="InterPro" id="IPR004161">
    <property type="entry name" value="EFTu-like_2"/>
</dbReference>
<dbReference type="InterPro" id="IPR031157">
    <property type="entry name" value="G_TR_CS"/>
</dbReference>
<dbReference type="InterPro" id="IPR054696">
    <property type="entry name" value="GTP-eEF1A_C"/>
</dbReference>
<dbReference type="InterPro" id="IPR027417">
    <property type="entry name" value="P-loop_NTPase"/>
</dbReference>
<dbReference type="InterPro" id="IPR005225">
    <property type="entry name" value="Small_GTP-bd"/>
</dbReference>
<dbReference type="InterPro" id="IPR000795">
    <property type="entry name" value="T_Tr_GTP-bd_dom"/>
</dbReference>
<dbReference type="InterPro" id="IPR050100">
    <property type="entry name" value="TRAFAC_GTPase_members"/>
</dbReference>
<dbReference type="InterPro" id="IPR009000">
    <property type="entry name" value="Transl_B-barrel_sf"/>
</dbReference>
<dbReference type="InterPro" id="IPR009001">
    <property type="entry name" value="Transl_elong_EF1A/Init_IF2_C"/>
</dbReference>
<dbReference type="InterPro" id="IPR004539">
    <property type="entry name" value="Transl_elong_EF1A_euk/arc"/>
</dbReference>
<dbReference type="NCBIfam" id="TIGR00483">
    <property type="entry name" value="EF-1_alpha"/>
    <property type="match status" value="1"/>
</dbReference>
<dbReference type="NCBIfam" id="NF008969">
    <property type="entry name" value="PRK12317.1"/>
    <property type="match status" value="1"/>
</dbReference>
<dbReference type="NCBIfam" id="TIGR00231">
    <property type="entry name" value="small_GTP"/>
    <property type="match status" value="1"/>
</dbReference>
<dbReference type="PANTHER" id="PTHR23115">
    <property type="entry name" value="TRANSLATION FACTOR"/>
    <property type="match status" value="1"/>
</dbReference>
<dbReference type="Pfam" id="PF22594">
    <property type="entry name" value="GTP-eEF1A_C"/>
    <property type="match status" value="1"/>
</dbReference>
<dbReference type="Pfam" id="PF00009">
    <property type="entry name" value="GTP_EFTU"/>
    <property type="match status" value="1"/>
</dbReference>
<dbReference type="Pfam" id="PF03144">
    <property type="entry name" value="GTP_EFTU_D2"/>
    <property type="match status" value="1"/>
</dbReference>
<dbReference type="PRINTS" id="PR00315">
    <property type="entry name" value="ELONGATNFCT"/>
</dbReference>
<dbReference type="SUPFAM" id="SSF50465">
    <property type="entry name" value="EF-Tu/eEF-1alpha/eIF2-gamma C-terminal domain"/>
    <property type="match status" value="1"/>
</dbReference>
<dbReference type="SUPFAM" id="SSF52540">
    <property type="entry name" value="P-loop containing nucleoside triphosphate hydrolases"/>
    <property type="match status" value="1"/>
</dbReference>
<dbReference type="SUPFAM" id="SSF50447">
    <property type="entry name" value="Translation proteins"/>
    <property type="match status" value="1"/>
</dbReference>
<dbReference type="PROSITE" id="PS00301">
    <property type="entry name" value="G_TR_1"/>
    <property type="match status" value="1"/>
</dbReference>
<dbReference type="PROSITE" id="PS51722">
    <property type="entry name" value="G_TR_2"/>
    <property type="match status" value="1"/>
</dbReference>
<reference key="1">
    <citation type="journal article" date="2006" name="Science">
        <title>Genome of rice cluster I archaea -- the key methane producers in the rice rhizosphere.</title>
        <authorList>
            <person name="Erkel C."/>
            <person name="Kube M."/>
            <person name="Reinhardt R."/>
            <person name="Liesack W."/>
        </authorList>
    </citation>
    <scope>NUCLEOTIDE SEQUENCE [LARGE SCALE GENOMIC DNA]</scope>
    <source>
        <strain>DSM 22066 / NBRC 105507 / MRE50</strain>
    </source>
</reference>
<accession>Q0W8G2</accession>
<proteinExistence type="inferred from homology"/>